<dbReference type="EC" id="1.17.7.4" evidence="1"/>
<dbReference type="EMBL" id="AE016823">
    <property type="protein sequence ID" value="AAS70125.1"/>
    <property type="status" value="ALT_INIT"/>
    <property type="molecule type" value="Genomic_DNA"/>
</dbReference>
<dbReference type="RefSeq" id="WP_000890370.1">
    <property type="nucleotide sequence ID" value="NC_005823.1"/>
</dbReference>
<dbReference type="SMR" id="Q72S57"/>
<dbReference type="GeneID" id="61144828"/>
<dbReference type="KEGG" id="lic:LIC_11529"/>
<dbReference type="HOGENOM" id="CLU_027486_1_0_12"/>
<dbReference type="UniPathway" id="UPA00056">
    <property type="reaction ID" value="UER00097"/>
</dbReference>
<dbReference type="UniPathway" id="UPA00059">
    <property type="reaction ID" value="UER00105"/>
</dbReference>
<dbReference type="Proteomes" id="UP000007037">
    <property type="component" value="Chromosome I"/>
</dbReference>
<dbReference type="GO" id="GO:0051539">
    <property type="term" value="F:4 iron, 4 sulfur cluster binding"/>
    <property type="evidence" value="ECO:0007669"/>
    <property type="project" value="UniProtKB-UniRule"/>
</dbReference>
<dbReference type="GO" id="GO:0051745">
    <property type="term" value="F:4-hydroxy-3-methylbut-2-enyl diphosphate reductase activity"/>
    <property type="evidence" value="ECO:0007669"/>
    <property type="project" value="UniProtKB-UniRule"/>
</dbReference>
<dbReference type="GO" id="GO:0046872">
    <property type="term" value="F:metal ion binding"/>
    <property type="evidence" value="ECO:0007669"/>
    <property type="project" value="UniProtKB-KW"/>
</dbReference>
<dbReference type="GO" id="GO:0050992">
    <property type="term" value="P:dimethylallyl diphosphate biosynthetic process"/>
    <property type="evidence" value="ECO:0007669"/>
    <property type="project" value="UniProtKB-UniRule"/>
</dbReference>
<dbReference type="GO" id="GO:0019288">
    <property type="term" value="P:isopentenyl diphosphate biosynthetic process, methylerythritol 4-phosphate pathway"/>
    <property type="evidence" value="ECO:0007669"/>
    <property type="project" value="UniProtKB-UniRule"/>
</dbReference>
<dbReference type="GO" id="GO:0016114">
    <property type="term" value="P:terpenoid biosynthetic process"/>
    <property type="evidence" value="ECO:0007669"/>
    <property type="project" value="UniProtKB-UniRule"/>
</dbReference>
<dbReference type="CDD" id="cd13944">
    <property type="entry name" value="lytB_ispH"/>
    <property type="match status" value="1"/>
</dbReference>
<dbReference type="Gene3D" id="3.40.50.11270">
    <property type="match status" value="1"/>
</dbReference>
<dbReference type="Gene3D" id="3.40.1010.20">
    <property type="entry name" value="4-hydroxy-3-methylbut-2-enyl diphosphate reductase, catalytic domain"/>
    <property type="match status" value="2"/>
</dbReference>
<dbReference type="HAMAP" id="MF_00191">
    <property type="entry name" value="IspH"/>
    <property type="match status" value="1"/>
</dbReference>
<dbReference type="InterPro" id="IPR003451">
    <property type="entry name" value="LytB/IspH"/>
</dbReference>
<dbReference type="NCBIfam" id="TIGR00216">
    <property type="entry name" value="ispH_lytB"/>
    <property type="match status" value="1"/>
</dbReference>
<dbReference type="PANTHER" id="PTHR30426">
    <property type="entry name" value="4-HYDROXY-3-METHYLBUT-2-ENYL DIPHOSPHATE REDUCTASE"/>
    <property type="match status" value="1"/>
</dbReference>
<dbReference type="PANTHER" id="PTHR30426:SF0">
    <property type="entry name" value="4-HYDROXY-3-METHYLBUT-2-ENYL DIPHOSPHATE REDUCTASE"/>
    <property type="match status" value="1"/>
</dbReference>
<dbReference type="Pfam" id="PF02401">
    <property type="entry name" value="LYTB"/>
    <property type="match status" value="1"/>
</dbReference>
<name>ISPH_LEPIC</name>
<organism>
    <name type="scientific">Leptospira interrogans serogroup Icterohaemorrhagiae serovar copenhageni (strain Fiocruz L1-130)</name>
    <dbReference type="NCBI Taxonomy" id="267671"/>
    <lineage>
        <taxon>Bacteria</taxon>
        <taxon>Pseudomonadati</taxon>
        <taxon>Spirochaetota</taxon>
        <taxon>Spirochaetia</taxon>
        <taxon>Leptospirales</taxon>
        <taxon>Leptospiraceae</taxon>
        <taxon>Leptospira</taxon>
    </lineage>
</organism>
<evidence type="ECO:0000255" key="1">
    <source>
        <dbReference type="HAMAP-Rule" id="MF_00191"/>
    </source>
</evidence>
<evidence type="ECO:0000305" key="2"/>
<keyword id="KW-0004">4Fe-4S</keyword>
<keyword id="KW-0408">Iron</keyword>
<keyword id="KW-0411">Iron-sulfur</keyword>
<keyword id="KW-0414">Isoprene biosynthesis</keyword>
<keyword id="KW-0479">Metal-binding</keyword>
<keyword id="KW-0560">Oxidoreductase</keyword>
<protein>
    <recommendedName>
        <fullName evidence="1">4-hydroxy-3-methylbut-2-enyl diphosphate reductase</fullName>
        <shortName evidence="1">HMBPP reductase</shortName>
        <ecNumber evidence="1">1.17.7.4</ecNumber>
    </recommendedName>
</protein>
<sequence length="312" mass="34740">MLEKIYLANPRGFCAGVKYAISYVEQVQANSEEQIYVRKEIVHNRRVVEDMKKNGIRFINDLDEAPNGATVIFSAHGVSPSVVEAAKQRGMKIGDATCPLVTRVHRKARKIKDTHQIIYIGHEGHDEAIGTMGEAEMFLVESLEDIISLKDKIDPNKPLTYLMQTTLSVADTKNIIDQISKTFPFVEHPSKDDICYATTERQEAVSLMMDKIDAMLVIGADNSSNSLRLLQLAQKSKPHSFKVSTADDLSKEYIQNNEIKILGLTAGASTPQVLVDEIISKLKIFYPNANVELFPGSRDDSMNFKLPGVLLS</sequence>
<proteinExistence type="inferred from homology"/>
<feature type="chain" id="PRO_0000128830" description="4-hydroxy-3-methylbut-2-enyl diphosphate reductase">
    <location>
        <begin position="1"/>
        <end position="312"/>
    </location>
</feature>
<feature type="active site" description="Proton donor" evidence="1">
    <location>
        <position position="127"/>
    </location>
</feature>
<feature type="binding site" evidence="1">
    <location>
        <position position="14"/>
    </location>
    <ligand>
        <name>[4Fe-4S] cluster</name>
        <dbReference type="ChEBI" id="CHEBI:49883"/>
    </ligand>
</feature>
<feature type="binding site" evidence="1">
    <location>
        <position position="43"/>
    </location>
    <ligand>
        <name>(2E)-4-hydroxy-3-methylbut-2-enyl diphosphate</name>
        <dbReference type="ChEBI" id="CHEBI:128753"/>
    </ligand>
</feature>
<feature type="binding site" evidence="1">
    <location>
        <position position="43"/>
    </location>
    <ligand>
        <name>dimethylallyl diphosphate</name>
        <dbReference type="ChEBI" id="CHEBI:57623"/>
    </ligand>
</feature>
<feature type="binding site" evidence="1">
    <location>
        <position position="43"/>
    </location>
    <ligand>
        <name>isopentenyl diphosphate</name>
        <dbReference type="ChEBI" id="CHEBI:128769"/>
    </ligand>
</feature>
<feature type="binding site" evidence="1">
    <location>
        <position position="76"/>
    </location>
    <ligand>
        <name>(2E)-4-hydroxy-3-methylbut-2-enyl diphosphate</name>
        <dbReference type="ChEBI" id="CHEBI:128753"/>
    </ligand>
</feature>
<feature type="binding site" evidence="1">
    <location>
        <position position="76"/>
    </location>
    <ligand>
        <name>dimethylallyl diphosphate</name>
        <dbReference type="ChEBI" id="CHEBI:57623"/>
    </ligand>
</feature>
<feature type="binding site" evidence="1">
    <location>
        <position position="76"/>
    </location>
    <ligand>
        <name>isopentenyl diphosphate</name>
        <dbReference type="ChEBI" id="CHEBI:128769"/>
    </ligand>
</feature>
<feature type="binding site" evidence="1">
    <location>
        <position position="98"/>
    </location>
    <ligand>
        <name>[4Fe-4S] cluster</name>
        <dbReference type="ChEBI" id="CHEBI:49883"/>
    </ligand>
</feature>
<feature type="binding site" evidence="1">
    <location>
        <position position="125"/>
    </location>
    <ligand>
        <name>(2E)-4-hydroxy-3-methylbut-2-enyl diphosphate</name>
        <dbReference type="ChEBI" id="CHEBI:128753"/>
    </ligand>
</feature>
<feature type="binding site" evidence="1">
    <location>
        <position position="125"/>
    </location>
    <ligand>
        <name>dimethylallyl diphosphate</name>
        <dbReference type="ChEBI" id="CHEBI:57623"/>
    </ligand>
</feature>
<feature type="binding site" evidence="1">
    <location>
        <position position="125"/>
    </location>
    <ligand>
        <name>isopentenyl diphosphate</name>
        <dbReference type="ChEBI" id="CHEBI:128769"/>
    </ligand>
</feature>
<feature type="binding site" evidence="1">
    <location>
        <position position="165"/>
    </location>
    <ligand>
        <name>(2E)-4-hydroxy-3-methylbut-2-enyl diphosphate</name>
        <dbReference type="ChEBI" id="CHEBI:128753"/>
    </ligand>
</feature>
<feature type="binding site" evidence="1">
    <location>
        <position position="195"/>
    </location>
    <ligand>
        <name>[4Fe-4S] cluster</name>
        <dbReference type="ChEBI" id="CHEBI:49883"/>
    </ligand>
</feature>
<feature type="binding site" evidence="1">
    <location>
        <position position="223"/>
    </location>
    <ligand>
        <name>(2E)-4-hydroxy-3-methylbut-2-enyl diphosphate</name>
        <dbReference type="ChEBI" id="CHEBI:128753"/>
    </ligand>
</feature>
<feature type="binding site" evidence="1">
    <location>
        <position position="223"/>
    </location>
    <ligand>
        <name>dimethylallyl diphosphate</name>
        <dbReference type="ChEBI" id="CHEBI:57623"/>
    </ligand>
</feature>
<feature type="binding site" evidence="1">
    <location>
        <position position="223"/>
    </location>
    <ligand>
        <name>isopentenyl diphosphate</name>
        <dbReference type="ChEBI" id="CHEBI:128769"/>
    </ligand>
</feature>
<feature type="binding site" evidence="1">
    <location>
        <position position="224"/>
    </location>
    <ligand>
        <name>(2E)-4-hydroxy-3-methylbut-2-enyl diphosphate</name>
        <dbReference type="ChEBI" id="CHEBI:128753"/>
    </ligand>
</feature>
<feature type="binding site" evidence="1">
    <location>
        <position position="224"/>
    </location>
    <ligand>
        <name>dimethylallyl diphosphate</name>
        <dbReference type="ChEBI" id="CHEBI:57623"/>
    </ligand>
</feature>
<feature type="binding site" evidence="1">
    <location>
        <position position="224"/>
    </location>
    <ligand>
        <name>isopentenyl diphosphate</name>
        <dbReference type="ChEBI" id="CHEBI:128769"/>
    </ligand>
</feature>
<feature type="binding site" evidence="1">
    <location>
        <position position="225"/>
    </location>
    <ligand>
        <name>(2E)-4-hydroxy-3-methylbut-2-enyl diphosphate</name>
        <dbReference type="ChEBI" id="CHEBI:128753"/>
    </ligand>
</feature>
<feature type="binding site" evidence="1">
    <location>
        <position position="225"/>
    </location>
    <ligand>
        <name>dimethylallyl diphosphate</name>
        <dbReference type="ChEBI" id="CHEBI:57623"/>
    </ligand>
</feature>
<feature type="binding site" evidence="1">
    <location>
        <position position="225"/>
    </location>
    <ligand>
        <name>isopentenyl diphosphate</name>
        <dbReference type="ChEBI" id="CHEBI:128769"/>
    </ligand>
</feature>
<feature type="binding site" evidence="1">
    <location>
        <position position="269"/>
    </location>
    <ligand>
        <name>(2E)-4-hydroxy-3-methylbut-2-enyl diphosphate</name>
        <dbReference type="ChEBI" id="CHEBI:128753"/>
    </ligand>
</feature>
<feature type="binding site" evidence="1">
    <location>
        <position position="269"/>
    </location>
    <ligand>
        <name>dimethylallyl diphosphate</name>
        <dbReference type="ChEBI" id="CHEBI:57623"/>
    </ligand>
</feature>
<feature type="binding site" evidence="1">
    <location>
        <position position="269"/>
    </location>
    <ligand>
        <name>isopentenyl diphosphate</name>
        <dbReference type="ChEBI" id="CHEBI:128769"/>
    </ligand>
</feature>
<accession>Q72S57</accession>
<reference key="1">
    <citation type="journal article" date="2004" name="J. Bacteriol.">
        <title>Comparative genomics of two Leptospira interrogans serovars reveals novel insights into physiology and pathogenesis.</title>
        <authorList>
            <person name="Nascimento A.L.T.O."/>
            <person name="Ko A.I."/>
            <person name="Martins E.A.L."/>
            <person name="Monteiro-Vitorello C.B."/>
            <person name="Ho P.L."/>
            <person name="Haake D.A."/>
            <person name="Verjovski-Almeida S."/>
            <person name="Hartskeerl R.A."/>
            <person name="Marques M.V."/>
            <person name="Oliveira M.C."/>
            <person name="Menck C.F.M."/>
            <person name="Leite L.C.C."/>
            <person name="Carrer H."/>
            <person name="Coutinho L.L."/>
            <person name="Degrave W.M."/>
            <person name="Dellagostin O.A."/>
            <person name="El-Dorry H."/>
            <person name="Ferro E.S."/>
            <person name="Ferro M.I.T."/>
            <person name="Furlan L.R."/>
            <person name="Gamberini M."/>
            <person name="Giglioti E.A."/>
            <person name="Goes-Neto A."/>
            <person name="Goldman G.H."/>
            <person name="Goldman M.H.S."/>
            <person name="Harakava R."/>
            <person name="Jeronimo S.M.B."/>
            <person name="Junqueira-de-Azevedo I.L.M."/>
            <person name="Kimura E.T."/>
            <person name="Kuramae E.E."/>
            <person name="Lemos E.G.M."/>
            <person name="Lemos M.V.F."/>
            <person name="Marino C.L."/>
            <person name="Nunes L.R."/>
            <person name="de Oliveira R.C."/>
            <person name="Pereira G.G."/>
            <person name="Reis M.S."/>
            <person name="Schriefer A."/>
            <person name="Siqueira W.J."/>
            <person name="Sommer P."/>
            <person name="Tsai S.M."/>
            <person name="Simpson A.J.G."/>
            <person name="Ferro J.A."/>
            <person name="Camargo L.E.A."/>
            <person name="Kitajima J.P."/>
            <person name="Setubal J.C."/>
            <person name="Van Sluys M.A."/>
        </authorList>
    </citation>
    <scope>NUCLEOTIDE SEQUENCE [LARGE SCALE GENOMIC DNA]</scope>
    <source>
        <strain>Fiocruz L1-130</strain>
    </source>
</reference>
<comment type="function">
    <text evidence="1">Catalyzes the conversion of 1-hydroxy-2-methyl-2-(E)-butenyl 4-diphosphate (HMBPP) into a mixture of isopentenyl diphosphate (IPP) and dimethylallyl diphosphate (DMAPP). Acts in the terminal step of the DOXP/MEP pathway for isoprenoid precursor biosynthesis.</text>
</comment>
<comment type="catalytic activity">
    <reaction evidence="1">
        <text>isopentenyl diphosphate + 2 oxidized [2Fe-2S]-[ferredoxin] + H2O = (2E)-4-hydroxy-3-methylbut-2-enyl diphosphate + 2 reduced [2Fe-2S]-[ferredoxin] + 2 H(+)</text>
        <dbReference type="Rhea" id="RHEA:24488"/>
        <dbReference type="Rhea" id="RHEA-COMP:10000"/>
        <dbReference type="Rhea" id="RHEA-COMP:10001"/>
        <dbReference type="ChEBI" id="CHEBI:15377"/>
        <dbReference type="ChEBI" id="CHEBI:15378"/>
        <dbReference type="ChEBI" id="CHEBI:33737"/>
        <dbReference type="ChEBI" id="CHEBI:33738"/>
        <dbReference type="ChEBI" id="CHEBI:128753"/>
        <dbReference type="ChEBI" id="CHEBI:128769"/>
        <dbReference type="EC" id="1.17.7.4"/>
    </reaction>
</comment>
<comment type="catalytic activity">
    <reaction evidence="1">
        <text>dimethylallyl diphosphate + 2 oxidized [2Fe-2S]-[ferredoxin] + H2O = (2E)-4-hydroxy-3-methylbut-2-enyl diphosphate + 2 reduced [2Fe-2S]-[ferredoxin] + 2 H(+)</text>
        <dbReference type="Rhea" id="RHEA:24825"/>
        <dbReference type="Rhea" id="RHEA-COMP:10000"/>
        <dbReference type="Rhea" id="RHEA-COMP:10001"/>
        <dbReference type="ChEBI" id="CHEBI:15377"/>
        <dbReference type="ChEBI" id="CHEBI:15378"/>
        <dbReference type="ChEBI" id="CHEBI:33737"/>
        <dbReference type="ChEBI" id="CHEBI:33738"/>
        <dbReference type="ChEBI" id="CHEBI:57623"/>
        <dbReference type="ChEBI" id="CHEBI:128753"/>
        <dbReference type="EC" id="1.17.7.4"/>
    </reaction>
</comment>
<comment type="cofactor">
    <cofactor evidence="1">
        <name>[4Fe-4S] cluster</name>
        <dbReference type="ChEBI" id="CHEBI:49883"/>
    </cofactor>
    <text evidence="1">Binds 1 [4Fe-4S] cluster per subunit.</text>
</comment>
<comment type="pathway">
    <text evidence="1">Isoprenoid biosynthesis; dimethylallyl diphosphate biosynthesis; dimethylallyl diphosphate from (2E)-4-hydroxy-3-methylbutenyl diphosphate: step 1/1.</text>
</comment>
<comment type="pathway">
    <text evidence="1">Isoprenoid biosynthesis; isopentenyl diphosphate biosynthesis via DXP pathway; isopentenyl diphosphate from 1-deoxy-D-xylulose 5-phosphate: step 6/6.</text>
</comment>
<comment type="similarity">
    <text evidence="1">Belongs to the IspH family.</text>
</comment>
<comment type="sequence caution" evidence="2">
    <conflict type="erroneous initiation">
        <sequence resource="EMBL-CDS" id="AAS70125"/>
    </conflict>
    <text>Extended N-terminus.</text>
</comment>
<gene>
    <name evidence="1" type="primary">ispH</name>
    <name type="synonym">lytB</name>
    <name type="ordered locus">LIC_11529</name>
</gene>